<evidence type="ECO:0000255" key="1">
    <source>
        <dbReference type="HAMAP-Rule" id="MF_01869"/>
    </source>
</evidence>
<dbReference type="EMBL" id="CP001120">
    <property type="protein sequence ID" value="ACF69516.1"/>
    <property type="molecule type" value="Genomic_DNA"/>
</dbReference>
<dbReference type="RefSeq" id="WP_000579484.1">
    <property type="nucleotide sequence ID" value="NC_011083.1"/>
</dbReference>
<dbReference type="SMR" id="B4TBG9"/>
<dbReference type="KEGG" id="seh:SeHA_C2542"/>
<dbReference type="HOGENOM" id="CLU_131462_5_1_6"/>
<dbReference type="UniPathway" id="UPA00030"/>
<dbReference type="Proteomes" id="UP000001866">
    <property type="component" value="Chromosome"/>
</dbReference>
<dbReference type="GO" id="GO:0005886">
    <property type="term" value="C:plasma membrane"/>
    <property type="evidence" value="ECO:0007669"/>
    <property type="project" value="UniProtKB-SubCell"/>
</dbReference>
<dbReference type="GO" id="GO:1901505">
    <property type="term" value="F:carbohydrate derivative transmembrane transporter activity"/>
    <property type="evidence" value="ECO:0007669"/>
    <property type="project" value="InterPro"/>
</dbReference>
<dbReference type="GO" id="GO:0009245">
    <property type="term" value="P:lipid A biosynthetic process"/>
    <property type="evidence" value="ECO:0007669"/>
    <property type="project" value="UniProtKB-UniRule"/>
</dbReference>
<dbReference type="GO" id="GO:0009103">
    <property type="term" value="P:lipopolysaccharide biosynthetic process"/>
    <property type="evidence" value="ECO:0007669"/>
    <property type="project" value="UniProtKB-UniRule"/>
</dbReference>
<dbReference type="FunFam" id="1.10.3730.20:FF:000002">
    <property type="entry name" value="Probable 4-amino-4-deoxy-L-arabinose-phosphoundecaprenol flippase subunit ArnE"/>
    <property type="match status" value="1"/>
</dbReference>
<dbReference type="Gene3D" id="1.10.3730.20">
    <property type="match status" value="1"/>
</dbReference>
<dbReference type="HAMAP" id="MF_01869">
    <property type="entry name" value="Flippase_ArnE"/>
    <property type="match status" value="1"/>
</dbReference>
<dbReference type="InterPro" id="IPR000620">
    <property type="entry name" value="EamA_dom"/>
</dbReference>
<dbReference type="InterPro" id="IPR022883">
    <property type="entry name" value="Flippase_ArnE"/>
</dbReference>
<dbReference type="InterPro" id="IPR000390">
    <property type="entry name" value="Small_drug/metabolite_transptr"/>
</dbReference>
<dbReference type="NCBIfam" id="NF011625">
    <property type="entry name" value="PRK15051.1"/>
    <property type="match status" value="1"/>
</dbReference>
<dbReference type="PANTHER" id="PTHR30561:SF23">
    <property type="entry name" value="4-AMINO-4-DEOXY-L-ARABINOSE-PHOSPHOUNDECAPRENOL FLIPPASE SUBUNIT ARNE-RELATED"/>
    <property type="match status" value="1"/>
</dbReference>
<dbReference type="PANTHER" id="PTHR30561">
    <property type="entry name" value="SMR FAMILY PROTON-DEPENDENT DRUG EFFLUX TRANSPORTER SUGE"/>
    <property type="match status" value="1"/>
</dbReference>
<dbReference type="Pfam" id="PF00892">
    <property type="entry name" value="EamA"/>
    <property type="match status" value="1"/>
</dbReference>
<dbReference type="SUPFAM" id="SSF103481">
    <property type="entry name" value="Multidrug resistance efflux transporter EmrE"/>
    <property type="match status" value="1"/>
</dbReference>
<organism>
    <name type="scientific">Salmonella heidelberg (strain SL476)</name>
    <dbReference type="NCBI Taxonomy" id="454169"/>
    <lineage>
        <taxon>Bacteria</taxon>
        <taxon>Pseudomonadati</taxon>
        <taxon>Pseudomonadota</taxon>
        <taxon>Gammaproteobacteria</taxon>
        <taxon>Enterobacterales</taxon>
        <taxon>Enterobacteriaceae</taxon>
        <taxon>Salmonella</taxon>
    </lineage>
</organism>
<keyword id="KW-0997">Cell inner membrane</keyword>
<keyword id="KW-1003">Cell membrane</keyword>
<keyword id="KW-0441">Lipid A biosynthesis</keyword>
<keyword id="KW-0444">Lipid biosynthesis</keyword>
<keyword id="KW-0443">Lipid metabolism</keyword>
<keyword id="KW-0448">Lipopolysaccharide biosynthesis</keyword>
<keyword id="KW-0472">Membrane</keyword>
<keyword id="KW-0812">Transmembrane</keyword>
<keyword id="KW-1133">Transmembrane helix</keyword>
<keyword id="KW-0813">Transport</keyword>
<sequence length="111" mass="12089">MIGIVLVLASLLSVGGQLCQKQATRPLTTGGRRRHLMLWLGLALICMGAAMVLWLLVLQTLPVGIAYPMLSLNFVWVTLAAWKIWHEQVPPRHWLGVALIISGIIILGSAA</sequence>
<feature type="chain" id="PRO_0000382995" description="Probable 4-amino-4-deoxy-L-arabinose-phosphoundecaprenol flippase subunit ArnE">
    <location>
        <begin position="1"/>
        <end position="111"/>
    </location>
</feature>
<feature type="transmembrane region" description="Helical" evidence="1">
    <location>
        <begin position="38"/>
        <end position="58"/>
    </location>
</feature>
<feature type="transmembrane region" description="Helical" evidence="1">
    <location>
        <begin position="61"/>
        <end position="81"/>
    </location>
</feature>
<feature type="transmembrane region" description="Helical" evidence="1">
    <location>
        <begin position="91"/>
        <end position="111"/>
    </location>
</feature>
<feature type="domain" description="EamA" evidence="1">
    <location>
        <begin position="40"/>
        <end position="109"/>
    </location>
</feature>
<comment type="function">
    <text evidence="1">Translocates 4-amino-4-deoxy-L-arabinose-phosphoundecaprenol (alpha-L-Ara4N-phosphoundecaprenol) from the cytoplasmic to the periplasmic side of the inner membrane.</text>
</comment>
<comment type="pathway">
    <text evidence="1">Bacterial outer membrane biogenesis; lipopolysaccharide biosynthesis.</text>
</comment>
<comment type="subunit">
    <text evidence="1">Heterodimer of ArnE and ArnF.</text>
</comment>
<comment type="subcellular location">
    <subcellularLocation>
        <location evidence="1">Cell inner membrane</location>
        <topology evidence="1">Multi-pass membrane protein</topology>
    </subcellularLocation>
</comment>
<comment type="similarity">
    <text evidence="1">Belongs to the ArnE family.</text>
</comment>
<reference key="1">
    <citation type="journal article" date="2011" name="J. Bacteriol.">
        <title>Comparative genomics of 28 Salmonella enterica isolates: evidence for CRISPR-mediated adaptive sublineage evolution.</title>
        <authorList>
            <person name="Fricke W.F."/>
            <person name="Mammel M.K."/>
            <person name="McDermott P.F."/>
            <person name="Tartera C."/>
            <person name="White D.G."/>
            <person name="Leclerc J.E."/>
            <person name="Ravel J."/>
            <person name="Cebula T.A."/>
        </authorList>
    </citation>
    <scope>NUCLEOTIDE SEQUENCE [LARGE SCALE GENOMIC DNA]</scope>
    <source>
        <strain>SL476</strain>
    </source>
</reference>
<accession>B4TBG9</accession>
<name>ARNE_SALHS</name>
<protein>
    <recommendedName>
        <fullName evidence="1">Probable 4-amino-4-deoxy-L-arabinose-phosphoundecaprenol flippase subunit ArnE</fullName>
        <shortName evidence="1">L-Ara4N-phosphoundecaprenol flippase subunit ArnE</shortName>
    </recommendedName>
    <alternativeName>
        <fullName evidence="1">Undecaprenyl phosphate-aminoarabinose flippase subunit ArnE</fullName>
    </alternativeName>
</protein>
<proteinExistence type="inferred from homology"/>
<gene>
    <name evidence="1" type="primary">arnE</name>
    <name type="ordered locus">SeHA_C2542</name>
</gene>